<sequence>MADTTVEKLATEVGKSVERLIEQFSQAGIKKGQADNVSEAEKQQLLDYLKKQHGADSAPTKMTLQRKTVSTLSVAGNGGQSKDVKVEVRKTRTFVKRDVNDTVLKAEEEAKAEAEALAKAKAEAEAAQAAKAKAEAEAKAKAEAEAKAKAKAAAEVKVTKESSPEVEAARLEAERLKAAQEAATKRKQDEEAAKAAEKARLLAEENSKRWAEEERQRLEAERNGDHHITTSKVARAAEDTSDLDEEKRGRRARNKSNAKKRGGKDARDGREKHMRNRSTAPESMAHGFNKPVAAVSRDVRIGETVTVSELAHLMAVKATEIIKQMMKMGSMVTINQVLDQETAQLVAEEMGHKVVLIRENELEHQVLQDRDDEDGIKLESRAPVVTIMGHVDHGKTSLLDYIRRAKVAAGEAGGITQHIGAYHVETENGMITFLDTPGHAAFTAMRARGAKATDIVVLVVAADDGVMPQTIEAIQHAKAGNVPLIVAVNKMDKPEADIDRVKSELSQHGVMSEDWGGDNMFAFVSAKTGEGVDDLLEGILLQAEVLELKAVRDGMAAGVVIESQLDKGRGPVATILVQEGTLRQGDIVLCGLEYGKIRAMKDENGRSITEAGPSIPVEILGLSGVPSAGDEATVVRDERKAREVALYRQGKFRDVKLARQQKSKLENMFANMTDGEVKELNIVLKADVQGSLEAITDSLTGLSTDEVKVNIIARGVGALTETDATLAAASNAIMVGFNVRADAQARKVIESESVDLRYYSVIYNLIDEVKAAMTGMLSPEFKQQIIGLAEVRDVFKSPKLGAIAGCMVTEGTIKRSAPIRVLRDNVVIFEGELESLRRFKDDVAEVRNGMECGIGVKNYNDVRVGDQIEVFETVEVARTL</sequence>
<proteinExistence type="inferred from homology"/>
<accession>A1RGX5</accession>
<reference key="1">
    <citation type="submission" date="2006-12" db="EMBL/GenBank/DDBJ databases">
        <title>Complete sequence of Shewanella sp. W3-18-1.</title>
        <authorList>
            <consortium name="US DOE Joint Genome Institute"/>
            <person name="Copeland A."/>
            <person name="Lucas S."/>
            <person name="Lapidus A."/>
            <person name="Barry K."/>
            <person name="Detter J.C."/>
            <person name="Glavina del Rio T."/>
            <person name="Hammon N."/>
            <person name="Israni S."/>
            <person name="Dalin E."/>
            <person name="Tice H."/>
            <person name="Pitluck S."/>
            <person name="Chain P."/>
            <person name="Malfatti S."/>
            <person name="Shin M."/>
            <person name="Vergez L."/>
            <person name="Schmutz J."/>
            <person name="Larimer F."/>
            <person name="Land M."/>
            <person name="Hauser L."/>
            <person name="Kyrpides N."/>
            <person name="Lykidis A."/>
            <person name="Tiedje J."/>
            <person name="Richardson P."/>
        </authorList>
    </citation>
    <scope>NUCLEOTIDE SEQUENCE [LARGE SCALE GENOMIC DNA]</scope>
    <source>
        <strain>W3-18-1</strain>
    </source>
</reference>
<organism>
    <name type="scientific">Shewanella sp. (strain W3-18-1)</name>
    <dbReference type="NCBI Taxonomy" id="351745"/>
    <lineage>
        <taxon>Bacteria</taxon>
        <taxon>Pseudomonadati</taxon>
        <taxon>Pseudomonadota</taxon>
        <taxon>Gammaproteobacteria</taxon>
        <taxon>Alteromonadales</taxon>
        <taxon>Shewanellaceae</taxon>
        <taxon>Shewanella</taxon>
    </lineage>
</organism>
<keyword id="KW-0963">Cytoplasm</keyword>
<keyword id="KW-0342">GTP-binding</keyword>
<keyword id="KW-0396">Initiation factor</keyword>
<keyword id="KW-0547">Nucleotide-binding</keyword>
<keyword id="KW-0648">Protein biosynthesis</keyword>
<comment type="function">
    <text evidence="2">One of the essential components for the initiation of protein synthesis. Protects formylmethionyl-tRNA from spontaneous hydrolysis and promotes its binding to the 30S ribosomal subunits. Also involved in the hydrolysis of GTP during the formation of the 70S ribosomal complex.</text>
</comment>
<comment type="subcellular location">
    <subcellularLocation>
        <location evidence="2">Cytoplasm</location>
    </subcellularLocation>
</comment>
<comment type="similarity">
    <text evidence="2">Belongs to the TRAFAC class translation factor GTPase superfamily. Classic translation factor GTPase family. IF-2 subfamily.</text>
</comment>
<name>IF2_SHESW</name>
<gene>
    <name evidence="2" type="primary">infB</name>
    <name type="ordered locus">Sputw3181_1070</name>
</gene>
<feature type="chain" id="PRO_1000008337" description="Translation initiation factor IF-2">
    <location>
        <begin position="1"/>
        <end position="880"/>
    </location>
</feature>
<feature type="domain" description="tr-type G">
    <location>
        <begin position="380"/>
        <end position="549"/>
    </location>
</feature>
<feature type="region of interest" description="Disordered" evidence="3">
    <location>
        <begin position="143"/>
        <end position="289"/>
    </location>
</feature>
<feature type="region of interest" description="G1" evidence="1">
    <location>
        <begin position="389"/>
        <end position="396"/>
    </location>
</feature>
<feature type="region of interest" description="G2" evidence="1">
    <location>
        <begin position="414"/>
        <end position="418"/>
    </location>
</feature>
<feature type="region of interest" description="G3" evidence="1">
    <location>
        <begin position="435"/>
        <end position="438"/>
    </location>
</feature>
<feature type="region of interest" description="G4" evidence="1">
    <location>
        <begin position="489"/>
        <end position="492"/>
    </location>
</feature>
<feature type="region of interest" description="G5" evidence="1">
    <location>
        <begin position="525"/>
        <end position="527"/>
    </location>
</feature>
<feature type="compositionally biased region" description="Basic and acidic residues" evidence="3">
    <location>
        <begin position="143"/>
        <end position="228"/>
    </location>
</feature>
<feature type="compositionally biased region" description="Basic residues" evidence="3">
    <location>
        <begin position="249"/>
        <end position="262"/>
    </location>
</feature>
<feature type="binding site" evidence="2">
    <location>
        <begin position="389"/>
        <end position="396"/>
    </location>
    <ligand>
        <name>GTP</name>
        <dbReference type="ChEBI" id="CHEBI:37565"/>
    </ligand>
</feature>
<feature type="binding site" evidence="2">
    <location>
        <begin position="435"/>
        <end position="439"/>
    </location>
    <ligand>
        <name>GTP</name>
        <dbReference type="ChEBI" id="CHEBI:37565"/>
    </ligand>
</feature>
<feature type="binding site" evidence="2">
    <location>
        <begin position="489"/>
        <end position="492"/>
    </location>
    <ligand>
        <name>GTP</name>
        <dbReference type="ChEBI" id="CHEBI:37565"/>
    </ligand>
</feature>
<protein>
    <recommendedName>
        <fullName evidence="2">Translation initiation factor IF-2</fullName>
    </recommendedName>
</protein>
<dbReference type="EMBL" id="CP000503">
    <property type="protein sequence ID" value="ABM23920.1"/>
    <property type="molecule type" value="Genomic_DNA"/>
</dbReference>
<dbReference type="RefSeq" id="WP_011788443.1">
    <property type="nucleotide sequence ID" value="NC_008750.1"/>
</dbReference>
<dbReference type="SMR" id="A1RGX5"/>
<dbReference type="GeneID" id="67444447"/>
<dbReference type="KEGG" id="shw:Sputw3181_1070"/>
<dbReference type="HOGENOM" id="CLU_006301_6_3_6"/>
<dbReference type="Proteomes" id="UP000002597">
    <property type="component" value="Chromosome"/>
</dbReference>
<dbReference type="GO" id="GO:0005829">
    <property type="term" value="C:cytosol"/>
    <property type="evidence" value="ECO:0007669"/>
    <property type="project" value="TreeGrafter"/>
</dbReference>
<dbReference type="GO" id="GO:0005525">
    <property type="term" value="F:GTP binding"/>
    <property type="evidence" value="ECO:0007669"/>
    <property type="project" value="UniProtKB-KW"/>
</dbReference>
<dbReference type="GO" id="GO:0003924">
    <property type="term" value="F:GTPase activity"/>
    <property type="evidence" value="ECO:0007669"/>
    <property type="project" value="UniProtKB-UniRule"/>
</dbReference>
<dbReference type="GO" id="GO:0097216">
    <property type="term" value="F:guanosine tetraphosphate binding"/>
    <property type="evidence" value="ECO:0007669"/>
    <property type="project" value="UniProtKB-ARBA"/>
</dbReference>
<dbReference type="GO" id="GO:0003743">
    <property type="term" value="F:translation initiation factor activity"/>
    <property type="evidence" value="ECO:0007669"/>
    <property type="project" value="UniProtKB-UniRule"/>
</dbReference>
<dbReference type="CDD" id="cd01887">
    <property type="entry name" value="IF2_eIF5B"/>
    <property type="match status" value="1"/>
</dbReference>
<dbReference type="CDD" id="cd03702">
    <property type="entry name" value="IF2_mtIF2_II"/>
    <property type="match status" value="1"/>
</dbReference>
<dbReference type="CDD" id="cd03692">
    <property type="entry name" value="mtIF2_IVc"/>
    <property type="match status" value="1"/>
</dbReference>
<dbReference type="FunFam" id="2.40.30.10:FF:000007">
    <property type="entry name" value="Translation initiation factor IF-2"/>
    <property type="match status" value="1"/>
</dbReference>
<dbReference type="FunFam" id="2.40.30.10:FF:000008">
    <property type="entry name" value="Translation initiation factor IF-2"/>
    <property type="match status" value="1"/>
</dbReference>
<dbReference type="FunFam" id="3.40.50.10050:FF:000001">
    <property type="entry name" value="Translation initiation factor IF-2"/>
    <property type="match status" value="1"/>
</dbReference>
<dbReference type="FunFam" id="3.40.50.300:FF:000019">
    <property type="entry name" value="Translation initiation factor IF-2"/>
    <property type="match status" value="1"/>
</dbReference>
<dbReference type="Gene3D" id="3.40.50.300">
    <property type="entry name" value="P-loop containing nucleotide triphosphate hydrolases"/>
    <property type="match status" value="1"/>
</dbReference>
<dbReference type="Gene3D" id="3.30.56.50">
    <property type="entry name" value="Putative DNA-binding domain, N-terminal subdomain of bacterial translation initiation factor IF2"/>
    <property type="match status" value="1"/>
</dbReference>
<dbReference type="Gene3D" id="2.40.30.10">
    <property type="entry name" value="Translation factors"/>
    <property type="match status" value="2"/>
</dbReference>
<dbReference type="Gene3D" id="3.40.50.10050">
    <property type="entry name" value="Translation initiation factor IF- 2, domain 3"/>
    <property type="match status" value="1"/>
</dbReference>
<dbReference type="HAMAP" id="MF_00100_B">
    <property type="entry name" value="IF_2_B"/>
    <property type="match status" value="1"/>
</dbReference>
<dbReference type="InterPro" id="IPR009061">
    <property type="entry name" value="DNA-bd_dom_put_sf"/>
</dbReference>
<dbReference type="InterPro" id="IPR053905">
    <property type="entry name" value="EF-G-like_DII"/>
</dbReference>
<dbReference type="InterPro" id="IPR004161">
    <property type="entry name" value="EFTu-like_2"/>
</dbReference>
<dbReference type="InterPro" id="IPR013575">
    <property type="entry name" value="IF2_assoc_dom_bac"/>
</dbReference>
<dbReference type="InterPro" id="IPR044145">
    <property type="entry name" value="IF2_II"/>
</dbReference>
<dbReference type="InterPro" id="IPR006847">
    <property type="entry name" value="IF2_N"/>
</dbReference>
<dbReference type="InterPro" id="IPR027417">
    <property type="entry name" value="P-loop_NTPase"/>
</dbReference>
<dbReference type="InterPro" id="IPR005225">
    <property type="entry name" value="Small_GTP-bd"/>
</dbReference>
<dbReference type="InterPro" id="IPR000795">
    <property type="entry name" value="T_Tr_GTP-bd_dom"/>
</dbReference>
<dbReference type="InterPro" id="IPR000178">
    <property type="entry name" value="TF_IF2_bacterial-like"/>
</dbReference>
<dbReference type="InterPro" id="IPR015760">
    <property type="entry name" value="TIF_IF2"/>
</dbReference>
<dbReference type="InterPro" id="IPR023115">
    <property type="entry name" value="TIF_IF2_dom3"/>
</dbReference>
<dbReference type="InterPro" id="IPR036925">
    <property type="entry name" value="TIF_IF2_dom3_sf"/>
</dbReference>
<dbReference type="InterPro" id="IPR009000">
    <property type="entry name" value="Transl_B-barrel_sf"/>
</dbReference>
<dbReference type="NCBIfam" id="TIGR00487">
    <property type="entry name" value="IF-2"/>
    <property type="match status" value="1"/>
</dbReference>
<dbReference type="NCBIfam" id="TIGR00231">
    <property type="entry name" value="small_GTP"/>
    <property type="match status" value="1"/>
</dbReference>
<dbReference type="PANTHER" id="PTHR43381:SF5">
    <property type="entry name" value="TR-TYPE G DOMAIN-CONTAINING PROTEIN"/>
    <property type="match status" value="1"/>
</dbReference>
<dbReference type="PANTHER" id="PTHR43381">
    <property type="entry name" value="TRANSLATION INITIATION FACTOR IF-2-RELATED"/>
    <property type="match status" value="1"/>
</dbReference>
<dbReference type="Pfam" id="PF22042">
    <property type="entry name" value="EF-G_D2"/>
    <property type="match status" value="1"/>
</dbReference>
<dbReference type="Pfam" id="PF00009">
    <property type="entry name" value="GTP_EFTU"/>
    <property type="match status" value="1"/>
</dbReference>
<dbReference type="Pfam" id="PF03144">
    <property type="entry name" value="GTP_EFTU_D2"/>
    <property type="match status" value="1"/>
</dbReference>
<dbReference type="Pfam" id="PF11987">
    <property type="entry name" value="IF-2"/>
    <property type="match status" value="1"/>
</dbReference>
<dbReference type="Pfam" id="PF08364">
    <property type="entry name" value="IF2_assoc"/>
    <property type="match status" value="1"/>
</dbReference>
<dbReference type="Pfam" id="PF04760">
    <property type="entry name" value="IF2_N"/>
    <property type="match status" value="2"/>
</dbReference>
<dbReference type="SUPFAM" id="SSF52156">
    <property type="entry name" value="Initiation factor IF2/eIF5b, domain 3"/>
    <property type="match status" value="1"/>
</dbReference>
<dbReference type="SUPFAM" id="SSF52540">
    <property type="entry name" value="P-loop containing nucleoside triphosphate hydrolases"/>
    <property type="match status" value="1"/>
</dbReference>
<dbReference type="SUPFAM" id="SSF46955">
    <property type="entry name" value="Putative DNA-binding domain"/>
    <property type="match status" value="1"/>
</dbReference>
<dbReference type="SUPFAM" id="SSF50447">
    <property type="entry name" value="Translation proteins"/>
    <property type="match status" value="2"/>
</dbReference>
<dbReference type="PROSITE" id="PS51722">
    <property type="entry name" value="G_TR_2"/>
    <property type="match status" value="1"/>
</dbReference>
<dbReference type="PROSITE" id="PS01176">
    <property type="entry name" value="IF2"/>
    <property type="match status" value="1"/>
</dbReference>
<evidence type="ECO:0000250" key="1"/>
<evidence type="ECO:0000255" key="2">
    <source>
        <dbReference type="HAMAP-Rule" id="MF_00100"/>
    </source>
</evidence>
<evidence type="ECO:0000256" key="3">
    <source>
        <dbReference type="SAM" id="MobiDB-lite"/>
    </source>
</evidence>